<organism>
    <name type="scientific">Streptococcus pneumoniae (strain P1031)</name>
    <dbReference type="NCBI Taxonomy" id="488223"/>
    <lineage>
        <taxon>Bacteria</taxon>
        <taxon>Bacillati</taxon>
        <taxon>Bacillota</taxon>
        <taxon>Bacilli</taxon>
        <taxon>Lactobacillales</taxon>
        <taxon>Streptococcaceae</taxon>
        <taxon>Streptococcus</taxon>
    </lineage>
</organism>
<protein>
    <recommendedName>
        <fullName evidence="1">Glycerol kinase</fullName>
        <ecNumber evidence="1">2.7.1.30</ecNumber>
    </recommendedName>
    <alternativeName>
        <fullName evidence="1">ATP:glycerol 3-phosphotransferase</fullName>
    </alternativeName>
    <alternativeName>
        <fullName evidence="1">Glycerokinase</fullName>
        <shortName evidence="1">GK</shortName>
    </alternativeName>
</protein>
<feature type="chain" id="PRO_1000124209" description="Glycerol kinase">
    <location>
        <begin position="1"/>
        <end position="502"/>
    </location>
</feature>
<feature type="binding site" evidence="1">
    <location>
        <position position="14"/>
    </location>
    <ligand>
        <name>ADP</name>
        <dbReference type="ChEBI" id="CHEBI:456216"/>
    </ligand>
</feature>
<feature type="binding site" evidence="1">
    <location>
        <position position="14"/>
    </location>
    <ligand>
        <name>ATP</name>
        <dbReference type="ChEBI" id="CHEBI:30616"/>
    </ligand>
</feature>
<feature type="binding site" evidence="1">
    <location>
        <position position="14"/>
    </location>
    <ligand>
        <name>sn-glycerol 3-phosphate</name>
        <dbReference type="ChEBI" id="CHEBI:57597"/>
    </ligand>
</feature>
<feature type="binding site" evidence="1">
    <location>
        <position position="15"/>
    </location>
    <ligand>
        <name>ATP</name>
        <dbReference type="ChEBI" id="CHEBI:30616"/>
    </ligand>
</feature>
<feature type="binding site" evidence="1">
    <location>
        <position position="16"/>
    </location>
    <ligand>
        <name>ATP</name>
        <dbReference type="ChEBI" id="CHEBI:30616"/>
    </ligand>
</feature>
<feature type="binding site" evidence="1">
    <location>
        <position position="18"/>
    </location>
    <ligand>
        <name>ADP</name>
        <dbReference type="ChEBI" id="CHEBI:456216"/>
    </ligand>
</feature>
<feature type="binding site" evidence="1">
    <location>
        <position position="84"/>
    </location>
    <ligand>
        <name>glycerol</name>
        <dbReference type="ChEBI" id="CHEBI:17754"/>
    </ligand>
</feature>
<feature type="binding site" evidence="1">
    <location>
        <position position="84"/>
    </location>
    <ligand>
        <name>sn-glycerol 3-phosphate</name>
        <dbReference type="ChEBI" id="CHEBI:57597"/>
    </ligand>
</feature>
<feature type="binding site" evidence="1">
    <location>
        <position position="85"/>
    </location>
    <ligand>
        <name>glycerol</name>
        <dbReference type="ChEBI" id="CHEBI:17754"/>
    </ligand>
</feature>
<feature type="binding site" evidence="1">
    <location>
        <position position="85"/>
    </location>
    <ligand>
        <name>sn-glycerol 3-phosphate</name>
        <dbReference type="ChEBI" id="CHEBI:57597"/>
    </ligand>
</feature>
<feature type="binding site" evidence="1">
    <location>
        <position position="136"/>
    </location>
    <ligand>
        <name>glycerol</name>
        <dbReference type="ChEBI" id="CHEBI:17754"/>
    </ligand>
</feature>
<feature type="binding site" evidence="1">
    <location>
        <position position="136"/>
    </location>
    <ligand>
        <name>sn-glycerol 3-phosphate</name>
        <dbReference type="ChEBI" id="CHEBI:57597"/>
    </ligand>
</feature>
<feature type="binding site" evidence="1">
    <location>
        <position position="246"/>
    </location>
    <ligand>
        <name>glycerol</name>
        <dbReference type="ChEBI" id="CHEBI:17754"/>
    </ligand>
</feature>
<feature type="binding site" evidence="1">
    <location>
        <position position="246"/>
    </location>
    <ligand>
        <name>sn-glycerol 3-phosphate</name>
        <dbReference type="ChEBI" id="CHEBI:57597"/>
    </ligand>
</feature>
<feature type="binding site" evidence="1">
    <location>
        <position position="247"/>
    </location>
    <ligand>
        <name>glycerol</name>
        <dbReference type="ChEBI" id="CHEBI:17754"/>
    </ligand>
</feature>
<feature type="binding site" evidence="1">
    <location>
        <position position="268"/>
    </location>
    <ligand>
        <name>ADP</name>
        <dbReference type="ChEBI" id="CHEBI:456216"/>
    </ligand>
</feature>
<feature type="binding site" evidence="1">
    <location>
        <position position="268"/>
    </location>
    <ligand>
        <name>ATP</name>
        <dbReference type="ChEBI" id="CHEBI:30616"/>
    </ligand>
</feature>
<feature type="binding site" evidence="1">
    <location>
        <position position="311"/>
    </location>
    <ligand>
        <name>ADP</name>
        <dbReference type="ChEBI" id="CHEBI:456216"/>
    </ligand>
</feature>
<feature type="binding site" evidence="1">
    <location>
        <position position="311"/>
    </location>
    <ligand>
        <name>ATP</name>
        <dbReference type="ChEBI" id="CHEBI:30616"/>
    </ligand>
</feature>
<feature type="binding site" evidence="1">
    <location>
        <position position="315"/>
    </location>
    <ligand>
        <name>ATP</name>
        <dbReference type="ChEBI" id="CHEBI:30616"/>
    </ligand>
</feature>
<feature type="binding site" evidence="1">
    <location>
        <position position="412"/>
    </location>
    <ligand>
        <name>ADP</name>
        <dbReference type="ChEBI" id="CHEBI:456216"/>
    </ligand>
</feature>
<feature type="binding site" evidence="1">
    <location>
        <position position="412"/>
    </location>
    <ligand>
        <name>ATP</name>
        <dbReference type="ChEBI" id="CHEBI:30616"/>
    </ligand>
</feature>
<feature type="binding site" evidence="1">
    <location>
        <position position="416"/>
    </location>
    <ligand>
        <name>ADP</name>
        <dbReference type="ChEBI" id="CHEBI:456216"/>
    </ligand>
</feature>
<feature type="modified residue" description="Phosphohistidine; by HPr" evidence="1">
    <location>
        <position position="232"/>
    </location>
</feature>
<accession>C1CNF8</accession>
<proteinExistence type="inferred from homology"/>
<comment type="function">
    <text evidence="1">Key enzyme in the regulation of glycerol uptake and metabolism. Catalyzes the phosphorylation of glycerol to yield sn-glycerol 3-phosphate.</text>
</comment>
<comment type="catalytic activity">
    <reaction evidence="1">
        <text>glycerol + ATP = sn-glycerol 3-phosphate + ADP + H(+)</text>
        <dbReference type="Rhea" id="RHEA:21644"/>
        <dbReference type="ChEBI" id="CHEBI:15378"/>
        <dbReference type="ChEBI" id="CHEBI:17754"/>
        <dbReference type="ChEBI" id="CHEBI:30616"/>
        <dbReference type="ChEBI" id="CHEBI:57597"/>
        <dbReference type="ChEBI" id="CHEBI:456216"/>
        <dbReference type="EC" id="2.7.1.30"/>
    </reaction>
</comment>
<comment type="activity regulation">
    <text evidence="1">Activated by phosphorylation and inhibited by fructose 1,6-bisphosphate (FBP).</text>
</comment>
<comment type="pathway">
    <text evidence="1">Polyol metabolism; glycerol degradation via glycerol kinase pathway; sn-glycerol 3-phosphate from glycerol: step 1/1.</text>
</comment>
<comment type="subunit">
    <text evidence="1">Homotetramer and homodimer (in equilibrium).</text>
</comment>
<comment type="PTM">
    <text evidence="1">The phosphoenolpyruvate-dependent sugar phosphotransferase system (PTS), including enzyme I, and histidine-containing protein (HPr) are required for the phosphorylation, which leads to the activation of the enzyme.</text>
</comment>
<comment type="similarity">
    <text evidence="1">Belongs to the FGGY kinase family.</text>
</comment>
<name>GLPK_STRZP</name>
<keyword id="KW-0067">ATP-binding</keyword>
<keyword id="KW-0319">Glycerol metabolism</keyword>
<keyword id="KW-0418">Kinase</keyword>
<keyword id="KW-0547">Nucleotide-binding</keyword>
<keyword id="KW-0597">Phosphoprotein</keyword>
<keyword id="KW-0808">Transferase</keyword>
<reference key="1">
    <citation type="journal article" date="2010" name="Genome Biol.">
        <title>Structure and dynamics of the pan-genome of Streptococcus pneumoniae and closely related species.</title>
        <authorList>
            <person name="Donati C."/>
            <person name="Hiller N.L."/>
            <person name="Tettelin H."/>
            <person name="Muzzi A."/>
            <person name="Croucher N.J."/>
            <person name="Angiuoli S.V."/>
            <person name="Oggioni M."/>
            <person name="Dunning Hotopp J.C."/>
            <person name="Hu F.Z."/>
            <person name="Riley D.R."/>
            <person name="Covacci A."/>
            <person name="Mitchell T.J."/>
            <person name="Bentley S.D."/>
            <person name="Kilian M."/>
            <person name="Ehrlich G.D."/>
            <person name="Rappuoli R."/>
            <person name="Moxon E.R."/>
            <person name="Masignani V."/>
        </authorList>
    </citation>
    <scope>NUCLEOTIDE SEQUENCE [LARGE SCALE GENOMIC DNA]</scope>
    <source>
        <strain>P1031</strain>
    </source>
</reference>
<evidence type="ECO:0000255" key="1">
    <source>
        <dbReference type="HAMAP-Rule" id="MF_00186"/>
    </source>
</evidence>
<gene>
    <name evidence="1" type="primary">glpK</name>
    <name type="ordered locus">SPP_2237</name>
</gene>
<sequence>MSQEKYIMAIDQGTTSSRAIIFNKKGEKVSSSQKEFTQIFPQAGWVEHNANEIWNSVQSVIAGAFIESGVKPNQIEAIGITNQRETTVVWDKKTGLPIYNAIVWQSRQTAPLAEQLKSQGYVEKFHEKTGLIIDAYFSATKVRWILDHVEGAQERAEKGELLFGTIDTWLVWKLTDGAAHVTDYSNAARTMLYNIKELKWDDEILEILNIPKAILPEVRSNSEIYGKTAPFHFYGGEVPISGMAGDQQAALFGQLAFEPGMVKNTYGTGSFIIMNTGEEMQLSENNLLTTIGYGINGKVYYALEGSIFIAGSAIQWLRDGLRMVENSPESEKYARDSHNNDEVYVVPAFTGLGAPYWNQNARGSVFGLTRGTSKEDFIKATLQSIAYQVRDIIDTMQMDTQTAIQVLKVDGGAAMNNFLMQFQADILGIDIARAKNLETTALGAAFLAGLSVGYWKDLDELKLLNETGELFEPSMNESRKEQLYKGWKKAVKATQVFAEIDD</sequence>
<dbReference type="EC" id="2.7.1.30" evidence="1"/>
<dbReference type="EMBL" id="CP000920">
    <property type="protein sequence ID" value="ACO21918.1"/>
    <property type="molecule type" value="Genomic_DNA"/>
</dbReference>
<dbReference type="RefSeq" id="WP_000076773.1">
    <property type="nucleotide sequence ID" value="NC_012467.1"/>
</dbReference>
<dbReference type="SMR" id="C1CNF8"/>
<dbReference type="KEGG" id="spp:SPP_2237"/>
<dbReference type="HOGENOM" id="CLU_009281_2_3_9"/>
<dbReference type="UniPathway" id="UPA00618">
    <property type="reaction ID" value="UER00672"/>
</dbReference>
<dbReference type="GO" id="GO:0005829">
    <property type="term" value="C:cytosol"/>
    <property type="evidence" value="ECO:0007669"/>
    <property type="project" value="TreeGrafter"/>
</dbReference>
<dbReference type="GO" id="GO:0005524">
    <property type="term" value="F:ATP binding"/>
    <property type="evidence" value="ECO:0007669"/>
    <property type="project" value="UniProtKB-UniRule"/>
</dbReference>
<dbReference type="GO" id="GO:0004370">
    <property type="term" value="F:glycerol kinase activity"/>
    <property type="evidence" value="ECO:0000250"/>
    <property type="project" value="UniProtKB"/>
</dbReference>
<dbReference type="GO" id="GO:0019563">
    <property type="term" value="P:glycerol catabolic process"/>
    <property type="evidence" value="ECO:0007669"/>
    <property type="project" value="UniProtKB-UniRule"/>
</dbReference>
<dbReference type="GO" id="GO:0006071">
    <property type="term" value="P:glycerol metabolic process"/>
    <property type="evidence" value="ECO:0000250"/>
    <property type="project" value="UniProtKB"/>
</dbReference>
<dbReference type="GO" id="GO:0006072">
    <property type="term" value="P:glycerol-3-phosphate metabolic process"/>
    <property type="evidence" value="ECO:0007669"/>
    <property type="project" value="InterPro"/>
</dbReference>
<dbReference type="CDD" id="cd07786">
    <property type="entry name" value="FGGY_EcGK_like"/>
    <property type="match status" value="1"/>
</dbReference>
<dbReference type="FunFam" id="3.30.420.40:FF:000007">
    <property type="entry name" value="Glycerol kinase"/>
    <property type="match status" value="1"/>
</dbReference>
<dbReference type="FunFam" id="3.30.420.40:FF:000008">
    <property type="entry name" value="Glycerol kinase"/>
    <property type="match status" value="1"/>
</dbReference>
<dbReference type="Gene3D" id="3.30.420.40">
    <property type="match status" value="2"/>
</dbReference>
<dbReference type="HAMAP" id="MF_00186">
    <property type="entry name" value="Glycerol_kin"/>
    <property type="match status" value="1"/>
</dbReference>
<dbReference type="InterPro" id="IPR043129">
    <property type="entry name" value="ATPase_NBD"/>
</dbReference>
<dbReference type="InterPro" id="IPR000577">
    <property type="entry name" value="Carb_kinase_FGGY"/>
</dbReference>
<dbReference type="InterPro" id="IPR018483">
    <property type="entry name" value="Carb_kinase_FGGY_CS"/>
</dbReference>
<dbReference type="InterPro" id="IPR018485">
    <property type="entry name" value="FGGY_C"/>
</dbReference>
<dbReference type="InterPro" id="IPR018484">
    <property type="entry name" value="FGGY_N"/>
</dbReference>
<dbReference type="InterPro" id="IPR005999">
    <property type="entry name" value="Glycerol_kin"/>
</dbReference>
<dbReference type="NCBIfam" id="TIGR01311">
    <property type="entry name" value="glycerol_kin"/>
    <property type="match status" value="1"/>
</dbReference>
<dbReference type="NCBIfam" id="NF000756">
    <property type="entry name" value="PRK00047.1"/>
    <property type="match status" value="1"/>
</dbReference>
<dbReference type="PANTHER" id="PTHR10196:SF69">
    <property type="entry name" value="GLYCEROL KINASE"/>
    <property type="match status" value="1"/>
</dbReference>
<dbReference type="PANTHER" id="PTHR10196">
    <property type="entry name" value="SUGAR KINASE"/>
    <property type="match status" value="1"/>
</dbReference>
<dbReference type="Pfam" id="PF02782">
    <property type="entry name" value="FGGY_C"/>
    <property type="match status" value="1"/>
</dbReference>
<dbReference type="Pfam" id="PF00370">
    <property type="entry name" value="FGGY_N"/>
    <property type="match status" value="1"/>
</dbReference>
<dbReference type="PIRSF" id="PIRSF000538">
    <property type="entry name" value="GlpK"/>
    <property type="match status" value="1"/>
</dbReference>
<dbReference type="SUPFAM" id="SSF53067">
    <property type="entry name" value="Actin-like ATPase domain"/>
    <property type="match status" value="2"/>
</dbReference>
<dbReference type="PROSITE" id="PS00933">
    <property type="entry name" value="FGGY_KINASES_1"/>
    <property type="match status" value="1"/>
</dbReference>
<dbReference type="PROSITE" id="PS00445">
    <property type="entry name" value="FGGY_KINASES_2"/>
    <property type="match status" value="1"/>
</dbReference>